<evidence type="ECO:0000255" key="1">
    <source>
        <dbReference type="HAMAP-Rule" id="MF_00017"/>
    </source>
</evidence>
<reference key="1">
    <citation type="journal article" date="2005" name="Nat. Biotechnol.">
        <title>Complete genome sequence of the plant commensal Pseudomonas fluorescens Pf-5.</title>
        <authorList>
            <person name="Paulsen I.T."/>
            <person name="Press C.M."/>
            <person name="Ravel J."/>
            <person name="Kobayashi D.Y."/>
            <person name="Myers G.S.A."/>
            <person name="Mavrodi D.V."/>
            <person name="DeBoy R.T."/>
            <person name="Seshadri R."/>
            <person name="Ren Q."/>
            <person name="Madupu R."/>
            <person name="Dodson R.J."/>
            <person name="Durkin A.S."/>
            <person name="Brinkac L.M."/>
            <person name="Daugherty S.C."/>
            <person name="Sullivan S.A."/>
            <person name="Rosovitz M.J."/>
            <person name="Gwinn M.L."/>
            <person name="Zhou L."/>
            <person name="Schneider D.J."/>
            <person name="Cartinhour S.W."/>
            <person name="Nelson W.C."/>
            <person name="Weidman J."/>
            <person name="Watkins K."/>
            <person name="Tran K."/>
            <person name="Khouri H."/>
            <person name="Pierson E.A."/>
            <person name="Pierson L.S. III"/>
            <person name="Thomashow L.S."/>
            <person name="Loper J.E."/>
        </authorList>
    </citation>
    <scope>NUCLEOTIDE SEQUENCE [LARGE SCALE GENOMIC DNA]</scope>
    <source>
        <strain>ATCC BAA-477 / NRRL B-23932 / Pf-5</strain>
    </source>
</reference>
<protein>
    <recommendedName>
        <fullName evidence="1">Recombination protein RecR</fullName>
    </recommendedName>
</protein>
<organism>
    <name type="scientific">Pseudomonas fluorescens (strain ATCC BAA-477 / NRRL B-23932 / Pf-5)</name>
    <dbReference type="NCBI Taxonomy" id="220664"/>
    <lineage>
        <taxon>Bacteria</taxon>
        <taxon>Pseudomonadati</taxon>
        <taxon>Pseudomonadota</taxon>
        <taxon>Gammaproteobacteria</taxon>
        <taxon>Pseudomonadales</taxon>
        <taxon>Pseudomonadaceae</taxon>
        <taxon>Pseudomonas</taxon>
    </lineage>
</organism>
<name>RECR_PSEF5</name>
<proteinExistence type="inferred from homology"/>
<gene>
    <name evidence="1" type="primary">recR</name>
    <name type="ordered locus">PFL_1907</name>
</gene>
<feature type="chain" id="PRO_1000001584" description="Recombination protein RecR">
    <location>
        <begin position="1"/>
        <end position="200"/>
    </location>
</feature>
<feature type="domain" description="Toprim" evidence="1">
    <location>
        <begin position="80"/>
        <end position="175"/>
    </location>
</feature>
<feature type="zinc finger region" description="C4-type" evidence="1">
    <location>
        <begin position="57"/>
        <end position="72"/>
    </location>
</feature>
<dbReference type="EMBL" id="CP000076">
    <property type="protein sequence ID" value="AAY91194.1"/>
    <property type="molecule type" value="Genomic_DNA"/>
</dbReference>
<dbReference type="RefSeq" id="WP_011060227.1">
    <property type="nucleotide sequence ID" value="NC_004129.6"/>
</dbReference>
<dbReference type="SMR" id="Q4KFF7"/>
<dbReference type="STRING" id="220664.PFL_1907"/>
<dbReference type="GeneID" id="57474934"/>
<dbReference type="KEGG" id="pfl:PFL_1907"/>
<dbReference type="PATRIC" id="fig|220664.5.peg.1944"/>
<dbReference type="eggNOG" id="COG0353">
    <property type="taxonomic scope" value="Bacteria"/>
</dbReference>
<dbReference type="HOGENOM" id="CLU_060739_1_2_6"/>
<dbReference type="Proteomes" id="UP000008540">
    <property type="component" value="Chromosome"/>
</dbReference>
<dbReference type="GO" id="GO:0003677">
    <property type="term" value="F:DNA binding"/>
    <property type="evidence" value="ECO:0007669"/>
    <property type="project" value="UniProtKB-UniRule"/>
</dbReference>
<dbReference type="GO" id="GO:0008270">
    <property type="term" value="F:zinc ion binding"/>
    <property type="evidence" value="ECO:0007669"/>
    <property type="project" value="UniProtKB-KW"/>
</dbReference>
<dbReference type="GO" id="GO:0006310">
    <property type="term" value="P:DNA recombination"/>
    <property type="evidence" value="ECO:0007669"/>
    <property type="project" value="UniProtKB-UniRule"/>
</dbReference>
<dbReference type="GO" id="GO:0006281">
    <property type="term" value="P:DNA repair"/>
    <property type="evidence" value="ECO:0007669"/>
    <property type="project" value="UniProtKB-UniRule"/>
</dbReference>
<dbReference type="CDD" id="cd01025">
    <property type="entry name" value="TOPRIM_recR"/>
    <property type="match status" value="1"/>
</dbReference>
<dbReference type="Gene3D" id="3.40.1360.10">
    <property type="match status" value="1"/>
</dbReference>
<dbReference type="Gene3D" id="6.10.250.240">
    <property type="match status" value="1"/>
</dbReference>
<dbReference type="Gene3D" id="1.10.8.420">
    <property type="entry name" value="RecR Domain 1"/>
    <property type="match status" value="1"/>
</dbReference>
<dbReference type="HAMAP" id="MF_00017">
    <property type="entry name" value="RecR"/>
    <property type="match status" value="1"/>
</dbReference>
<dbReference type="InterPro" id="IPR000093">
    <property type="entry name" value="DNA_Rcmb_RecR"/>
</dbReference>
<dbReference type="InterPro" id="IPR023627">
    <property type="entry name" value="Rcmb_RecR"/>
</dbReference>
<dbReference type="InterPro" id="IPR015967">
    <property type="entry name" value="Rcmb_RecR_Znf"/>
</dbReference>
<dbReference type="InterPro" id="IPR006171">
    <property type="entry name" value="TOPRIM_dom"/>
</dbReference>
<dbReference type="InterPro" id="IPR034137">
    <property type="entry name" value="TOPRIM_RecR"/>
</dbReference>
<dbReference type="NCBIfam" id="TIGR00615">
    <property type="entry name" value="recR"/>
    <property type="match status" value="1"/>
</dbReference>
<dbReference type="PANTHER" id="PTHR30446">
    <property type="entry name" value="RECOMBINATION PROTEIN RECR"/>
    <property type="match status" value="1"/>
</dbReference>
<dbReference type="PANTHER" id="PTHR30446:SF0">
    <property type="entry name" value="RECOMBINATION PROTEIN RECR"/>
    <property type="match status" value="1"/>
</dbReference>
<dbReference type="Pfam" id="PF21175">
    <property type="entry name" value="RecR_C"/>
    <property type="match status" value="1"/>
</dbReference>
<dbReference type="Pfam" id="PF21176">
    <property type="entry name" value="RecR_HhH"/>
    <property type="match status" value="1"/>
</dbReference>
<dbReference type="Pfam" id="PF02132">
    <property type="entry name" value="RecR_ZnF"/>
    <property type="match status" value="1"/>
</dbReference>
<dbReference type="Pfam" id="PF13662">
    <property type="entry name" value="Toprim_4"/>
    <property type="match status" value="1"/>
</dbReference>
<dbReference type="SMART" id="SM00493">
    <property type="entry name" value="TOPRIM"/>
    <property type="match status" value="1"/>
</dbReference>
<dbReference type="SUPFAM" id="SSF111304">
    <property type="entry name" value="Recombination protein RecR"/>
    <property type="match status" value="1"/>
</dbReference>
<dbReference type="PROSITE" id="PS01300">
    <property type="entry name" value="RECR"/>
    <property type="match status" value="1"/>
</dbReference>
<dbReference type="PROSITE" id="PS50880">
    <property type="entry name" value="TOPRIM"/>
    <property type="match status" value="1"/>
</dbReference>
<keyword id="KW-0227">DNA damage</keyword>
<keyword id="KW-0233">DNA recombination</keyword>
<keyword id="KW-0234">DNA repair</keyword>
<keyword id="KW-0479">Metal-binding</keyword>
<keyword id="KW-0862">Zinc</keyword>
<keyword id="KW-0863">Zinc-finger</keyword>
<accession>Q4KFF7</accession>
<comment type="function">
    <text evidence="1">May play a role in DNA repair. It seems to be involved in an RecBC-independent recombinational process of DNA repair. It may act with RecF and RecO.</text>
</comment>
<comment type="similarity">
    <text evidence="1">Belongs to the RecR family.</text>
</comment>
<sequence length="200" mass="21554">MSFSPLIRQLIDALRTLPGVGQKTAQRMALQLLERDRSGGLRLAQALSQAMEGVGHCRQCRTLTEDELCPQCADPRRDDTLLCVVEGPMDVYAVEQTGYRGRYFVLKGHLSPLDGLGPEAIGIPQLLARIEEQGSFSEVILATNPTVEGEATAHYIAQLLTNKGLITSRIAHGVPLGGELELVDGGTLAHSFAGRKPIAL</sequence>